<comment type="function">
    <text evidence="1">Catalyzes the proton-dependent uptake of 2-keto-3-deoxygluconate (KDG) into the cell.</text>
</comment>
<comment type="catalytic activity">
    <reaction evidence="1">
        <text>2-dehydro-3-deoxy-D-gluconate(in) + H(+)(in) = 2-dehydro-3-deoxy-D-gluconate(out) + H(+)(out)</text>
        <dbReference type="Rhea" id="RHEA:29943"/>
        <dbReference type="ChEBI" id="CHEBI:15378"/>
        <dbReference type="ChEBI" id="CHEBI:57990"/>
    </reaction>
    <physiologicalReaction direction="right-to-left" evidence="1">
        <dbReference type="Rhea" id="RHEA:29945"/>
    </physiologicalReaction>
</comment>
<comment type="subcellular location">
    <subcellularLocation>
        <location evidence="1">Cell inner membrane</location>
        <topology evidence="1">Multi-pass membrane protein</topology>
    </subcellularLocation>
</comment>
<comment type="similarity">
    <text evidence="1">Belongs to the KdgT transporter family.</text>
</comment>
<sequence length="327" mass="33695">MQIKRLIEKIPGGMMLVPLFLGALCHTFSPGAGKYFGSFTNGMITGTVPILAVWFFCMGASIKLSATGTVLRKSGTLVVTKIAVAWVVAAIASRIIPEHGVEVGFFAGLSTLALVAAMDMTNGGLYASIMQQYGTKEEAGAFVLMSLESGPLMTMIILGTAGIASFEPHVFVGAVLPFLVGFALGNLDPELREFFSKAVQTLIPFFAFALGNTIDLTVIAQTGLLGILLGVAVIIVTGIPLIIADKLIGGGDGTAGIAASSSAGAAVATPVLIAEMVPAFKPMAPAATSLVATAVIVTSILVPILTSIWSRKVKARAAKIEILGTVK</sequence>
<name>KDGT_ECO5E</name>
<keyword id="KW-0997">Cell inner membrane</keyword>
<keyword id="KW-1003">Cell membrane</keyword>
<keyword id="KW-0472">Membrane</keyword>
<keyword id="KW-0762">Sugar transport</keyword>
<keyword id="KW-0769">Symport</keyword>
<keyword id="KW-0812">Transmembrane</keyword>
<keyword id="KW-1133">Transmembrane helix</keyword>
<keyword id="KW-0813">Transport</keyword>
<gene>
    <name evidence="1" type="primary">kdgT</name>
    <name type="ordered locus">ECH74115_5364</name>
</gene>
<protein>
    <recommendedName>
        <fullName evidence="1">2-keto-3-deoxygluconate permease</fullName>
        <shortName evidence="1">KDG permease</shortName>
    </recommendedName>
</protein>
<accession>B5YZ47</accession>
<feature type="chain" id="PRO_1000092361" description="2-keto-3-deoxygluconate permease">
    <location>
        <begin position="1"/>
        <end position="327"/>
    </location>
</feature>
<feature type="transmembrane region" description="Helical" evidence="1">
    <location>
        <begin position="10"/>
        <end position="30"/>
    </location>
</feature>
<feature type="transmembrane region" description="Helical" evidence="1">
    <location>
        <begin position="42"/>
        <end position="62"/>
    </location>
</feature>
<feature type="transmembrane region" description="Helical" evidence="1">
    <location>
        <begin position="73"/>
        <end position="93"/>
    </location>
</feature>
<feature type="transmembrane region" description="Helical" evidence="1">
    <location>
        <begin position="95"/>
        <end position="115"/>
    </location>
</feature>
<feature type="transmembrane region" description="Helical" evidence="1">
    <location>
        <begin position="139"/>
        <end position="159"/>
    </location>
</feature>
<feature type="transmembrane region" description="Helical" evidence="1">
    <location>
        <begin position="163"/>
        <end position="183"/>
    </location>
</feature>
<feature type="transmembrane region" description="Helical" evidence="1">
    <location>
        <begin position="199"/>
        <end position="219"/>
    </location>
</feature>
<feature type="transmembrane region" description="Helical" evidence="1">
    <location>
        <begin position="224"/>
        <end position="244"/>
    </location>
</feature>
<feature type="transmembrane region" description="Helical" evidence="1">
    <location>
        <begin position="254"/>
        <end position="274"/>
    </location>
</feature>
<feature type="transmembrane region" description="Helical" evidence="1">
    <location>
        <begin position="289"/>
        <end position="309"/>
    </location>
</feature>
<dbReference type="EMBL" id="CP001164">
    <property type="protein sequence ID" value="ACI38399.1"/>
    <property type="molecule type" value="Genomic_DNA"/>
</dbReference>
<dbReference type="RefSeq" id="WP_001166037.1">
    <property type="nucleotide sequence ID" value="NC_011353.1"/>
</dbReference>
<dbReference type="KEGG" id="ecf:ECH74115_5364"/>
<dbReference type="HOGENOM" id="CLU_057476_0_1_6"/>
<dbReference type="GO" id="GO:0005886">
    <property type="term" value="C:plasma membrane"/>
    <property type="evidence" value="ECO:0007669"/>
    <property type="project" value="UniProtKB-SubCell"/>
</dbReference>
<dbReference type="GO" id="GO:0015649">
    <property type="term" value="F:2-keto-3-deoxygluconate:proton symporter activity"/>
    <property type="evidence" value="ECO:0007669"/>
    <property type="project" value="UniProtKB-UniRule"/>
</dbReference>
<dbReference type="HAMAP" id="MF_00070">
    <property type="entry name" value="KdgT"/>
    <property type="match status" value="1"/>
</dbReference>
<dbReference type="InterPro" id="IPR004684">
    <property type="entry name" value="2keto-3dGluconate_permease"/>
</dbReference>
<dbReference type="InterPro" id="IPR018395">
    <property type="entry name" value="2keto-3dGluconate_permease_sub"/>
</dbReference>
<dbReference type="NCBIfam" id="TIGR00793">
    <property type="entry name" value="kdgT"/>
    <property type="match status" value="1"/>
</dbReference>
<dbReference type="Pfam" id="PF03812">
    <property type="entry name" value="KdgT"/>
    <property type="match status" value="1"/>
</dbReference>
<proteinExistence type="inferred from homology"/>
<reference key="1">
    <citation type="journal article" date="2011" name="Proc. Natl. Acad. Sci. U.S.A.">
        <title>Genomic anatomy of Escherichia coli O157:H7 outbreaks.</title>
        <authorList>
            <person name="Eppinger M."/>
            <person name="Mammel M.K."/>
            <person name="Leclerc J.E."/>
            <person name="Ravel J."/>
            <person name="Cebula T.A."/>
        </authorList>
    </citation>
    <scope>NUCLEOTIDE SEQUENCE [LARGE SCALE GENOMIC DNA]</scope>
    <source>
        <strain>EC4115 / EHEC</strain>
    </source>
</reference>
<organism>
    <name type="scientific">Escherichia coli O157:H7 (strain EC4115 / EHEC)</name>
    <dbReference type="NCBI Taxonomy" id="444450"/>
    <lineage>
        <taxon>Bacteria</taxon>
        <taxon>Pseudomonadati</taxon>
        <taxon>Pseudomonadota</taxon>
        <taxon>Gammaproteobacteria</taxon>
        <taxon>Enterobacterales</taxon>
        <taxon>Enterobacteriaceae</taxon>
        <taxon>Escherichia</taxon>
    </lineage>
</organism>
<evidence type="ECO:0000255" key="1">
    <source>
        <dbReference type="HAMAP-Rule" id="MF_00070"/>
    </source>
</evidence>